<name>BIOD_CLOPE</name>
<protein>
    <recommendedName>
        <fullName evidence="1">ATP-dependent dethiobiotin synthetase BioD</fullName>
        <ecNumber evidence="1">6.3.3.3</ecNumber>
    </recommendedName>
    <alternativeName>
        <fullName evidence="1">DTB synthetase</fullName>
        <shortName evidence="1">DTBS</shortName>
    </alternativeName>
    <alternativeName>
        <fullName evidence="1">Dethiobiotin synthase</fullName>
    </alternativeName>
</protein>
<keyword id="KW-0067">ATP-binding</keyword>
<keyword id="KW-0093">Biotin biosynthesis</keyword>
<keyword id="KW-0963">Cytoplasm</keyword>
<keyword id="KW-0436">Ligase</keyword>
<keyword id="KW-0460">Magnesium</keyword>
<keyword id="KW-0479">Metal-binding</keyword>
<keyword id="KW-0547">Nucleotide-binding</keyword>
<keyword id="KW-1185">Reference proteome</keyword>
<evidence type="ECO:0000255" key="1">
    <source>
        <dbReference type="HAMAP-Rule" id="MF_00336"/>
    </source>
</evidence>
<accession>Q8XK60</accession>
<feature type="chain" id="PRO_0000187959" description="ATP-dependent dethiobiotin synthetase BioD">
    <location>
        <begin position="1"/>
        <end position="228"/>
    </location>
</feature>
<feature type="active site" evidence="1">
    <location>
        <position position="38"/>
    </location>
</feature>
<feature type="binding site" evidence="1">
    <location>
        <begin position="13"/>
        <end position="18"/>
    </location>
    <ligand>
        <name>ATP</name>
        <dbReference type="ChEBI" id="CHEBI:30616"/>
    </ligand>
</feature>
<feature type="binding site" evidence="1">
    <location>
        <position position="17"/>
    </location>
    <ligand>
        <name>Mg(2+)</name>
        <dbReference type="ChEBI" id="CHEBI:18420"/>
    </ligand>
</feature>
<feature type="binding site" evidence="1">
    <location>
        <position position="42"/>
    </location>
    <ligand>
        <name>substrate</name>
    </ligand>
</feature>
<feature type="binding site" evidence="1">
    <location>
        <position position="55"/>
    </location>
    <ligand>
        <name>ATP</name>
        <dbReference type="ChEBI" id="CHEBI:30616"/>
    </ligand>
</feature>
<feature type="binding site" evidence="1">
    <location>
        <position position="55"/>
    </location>
    <ligand>
        <name>Mg(2+)</name>
        <dbReference type="ChEBI" id="CHEBI:18420"/>
    </ligand>
</feature>
<feature type="binding site" evidence="1">
    <location>
        <begin position="116"/>
        <end position="119"/>
    </location>
    <ligand>
        <name>ATP</name>
        <dbReference type="ChEBI" id="CHEBI:30616"/>
    </ligand>
</feature>
<feature type="binding site" evidence="1">
    <location>
        <position position="116"/>
    </location>
    <ligand>
        <name>Mg(2+)</name>
        <dbReference type="ChEBI" id="CHEBI:18420"/>
    </ligand>
</feature>
<feature type="binding site" evidence="1">
    <location>
        <begin position="179"/>
        <end position="180"/>
    </location>
    <ligand>
        <name>ATP</name>
        <dbReference type="ChEBI" id="CHEBI:30616"/>
    </ligand>
</feature>
<feature type="binding site" evidence="1">
    <location>
        <begin position="208"/>
        <end position="210"/>
    </location>
    <ligand>
        <name>ATP</name>
        <dbReference type="ChEBI" id="CHEBI:30616"/>
    </ligand>
</feature>
<gene>
    <name evidence="1" type="primary">bioD</name>
    <name type="ordered locus">CPE1543</name>
</gene>
<comment type="function">
    <text evidence="1">Catalyzes a mechanistically unusual reaction, the ATP-dependent insertion of CO2 between the N7 and N8 nitrogen atoms of 7,8-diaminopelargonic acid (DAPA, also called 7,8-diammoniononanoate) to form a ureido ring.</text>
</comment>
<comment type="catalytic activity">
    <reaction evidence="1">
        <text>(7R,8S)-7,8-diammoniononanoate + CO2 + ATP = (4R,5S)-dethiobiotin + ADP + phosphate + 3 H(+)</text>
        <dbReference type="Rhea" id="RHEA:15805"/>
        <dbReference type="ChEBI" id="CHEBI:15378"/>
        <dbReference type="ChEBI" id="CHEBI:16526"/>
        <dbReference type="ChEBI" id="CHEBI:30616"/>
        <dbReference type="ChEBI" id="CHEBI:43474"/>
        <dbReference type="ChEBI" id="CHEBI:149469"/>
        <dbReference type="ChEBI" id="CHEBI:149473"/>
        <dbReference type="ChEBI" id="CHEBI:456216"/>
        <dbReference type="EC" id="6.3.3.3"/>
    </reaction>
</comment>
<comment type="cofactor">
    <cofactor evidence="1">
        <name>Mg(2+)</name>
        <dbReference type="ChEBI" id="CHEBI:18420"/>
    </cofactor>
</comment>
<comment type="pathway">
    <text evidence="1">Cofactor biosynthesis; biotin biosynthesis; biotin from 7,8-diaminononanoate: step 1/2.</text>
</comment>
<comment type="subunit">
    <text evidence="1">Homodimer.</text>
</comment>
<comment type="subcellular location">
    <subcellularLocation>
        <location evidence="1">Cytoplasm</location>
    </subcellularLocation>
</comment>
<comment type="similarity">
    <text evidence="1">Belongs to the dethiobiotin synthetase family.</text>
</comment>
<proteinExistence type="inferred from homology"/>
<organism>
    <name type="scientific">Clostridium perfringens (strain 13 / Type A)</name>
    <dbReference type="NCBI Taxonomy" id="195102"/>
    <lineage>
        <taxon>Bacteria</taxon>
        <taxon>Bacillati</taxon>
        <taxon>Bacillota</taxon>
        <taxon>Clostridia</taxon>
        <taxon>Eubacteriales</taxon>
        <taxon>Clostridiaceae</taxon>
        <taxon>Clostridium</taxon>
    </lineage>
</organism>
<reference key="1">
    <citation type="journal article" date="2002" name="Proc. Natl. Acad. Sci. U.S.A.">
        <title>Complete genome sequence of Clostridium perfringens, an anaerobic flesh-eater.</title>
        <authorList>
            <person name="Shimizu T."/>
            <person name="Ohtani K."/>
            <person name="Hirakawa H."/>
            <person name="Ohshima K."/>
            <person name="Yamashita A."/>
            <person name="Shiba T."/>
            <person name="Ogasawara N."/>
            <person name="Hattori M."/>
            <person name="Kuhara S."/>
            <person name="Hayashi H."/>
        </authorList>
    </citation>
    <scope>NUCLEOTIDE SEQUENCE [LARGE SCALE GENOMIC DNA]</scope>
    <source>
        <strain>13 / Type A</strain>
    </source>
</reference>
<dbReference type="EC" id="6.3.3.3" evidence="1"/>
<dbReference type="EMBL" id="BA000016">
    <property type="protein sequence ID" value="BAB81249.1"/>
    <property type="molecule type" value="Genomic_DNA"/>
</dbReference>
<dbReference type="RefSeq" id="WP_011010499.1">
    <property type="nucleotide sequence ID" value="NC_003366.1"/>
</dbReference>
<dbReference type="SMR" id="Q8XK60"/>
<dbReference type="STRING" id="195102.gene:10490807"/>
<dbReference type="KEGG" id="cpe:CPE1543"/>
<dbReference type="HOGENOM" id="CLU_072551_3_0_9"/>
<dbReference type="UniPathway" id="UPA00078">
    <property type="reaction ID" value="UER00161"/>
</dbReference>
<dbReference type="Proteomes" id="UP000000818">
    <property type="component" value="Chromosome"/>
</dbReference>
<dbReference type="GO" id="GO:0005829">
    <property type="term" value="C:cytosol"/>
    <property type="evidence" value="ECO:0007669"/>
    <property type="project" value="TreeGrafter"/>
</dbReference>
<dbReference type="GO" id="GO:0005524">
    <property type="term" value="F:ATP binding"/>
    <property type="evidence" value="ECO:0007669"/>
    <property type="project" value="UniProtKB-UniRule"/>
</dbReference>
<dbReference type="GO" id="GO:0004141">
    <property type="term" value="F:dethiobiotin synthase activity"/>
    <property type="evidence" value="ECO:0007669"/>
    <property type="project" value="UniProtKB-UniRule"/>
</dbReference>
<dbReference type="GO" id="GO:0000287">
    <property type="term" value="F:magnesium ion binding"/>
    <property type="evidence" value="ECO:0007669"/>
    <property type="project" value="UniProtKB-UniRule"/>
</dbReference>
<dbReference type="GO" id="GO:0009102">
    <property type="term" value="P:biotin biosynthetic process"/>
    <property type="evidence" value="ECO:0007669"/>
    <property type="project" value="UniProtKB-UniRule"/>
</dbReference>
<dbReference type="CDD" id="cd03109">
    <property type="entry name" value="DTBS"/>
    <property type="match status" value="1"/>
</dbReference>
<dbReference type="Gene3D" id="3.40.50.300">
    <property type="entry name" value="P-loop containing nucleotide triphosphate hydrolases"/>
    <property type="match status" value="1"/>
</dbReference>
<dbReference type="HAMAP" id="MF_00336">
    <property type="entry name" value="BioD"/>
    <property type="match status" value="1"/>
</dbReference>
<dbReference type="InterPro" id="IPR004472">
    <property type="entry name" value="DTB_synth_BioD"/>
</dbReference>
<dbReference type="InterPro" id="IPR027417">
    <property type="entry name" value="P-loop_NTPase"/>
</dbReference>
<dbReference type="NCBIfam" id="TIGR00347">
    <property type="entry name" value="bioD"/>
    <property type="match status" value="1"/>
</dbReference>
<dbReference type="PANTHER" id="PTHR43210:SF2">
    <property type="entry name" value="ATP-DEPENDENT DETHIOBIOTIN SYNTHETASE BIOD 2"/>
    <property type="match status" value="1"/>
</dbReference>
<dbReference type="PANTHER" id="PTHR43210">
    <property type="entry name" value="DETHIOBIOTIN SYNTHETASE"/>
    <property type="match status" value="1"/>
</dbReference>
<dbReference type="Pfam" id="PF13500">
    <property type="entry name" value="AAA_26"/>
    <property type="match status" value="1"/>
</dbReference>
<dbReference type="PIRSF" id="PIRSF006755">
    <property type="entry name" value="DTB_synth"/>
    <property type="match status" value="1"/>
</dbReference>
<dbReference type="SUPFAM" id="SSF52540">
    <property type="entry name" value="P-loop containing nucleoside triphosphate hydrolases"/>
    <property type="match status" value="1"/>
</dbReference>
<sequence>MEKGVYIIGTNTDIGKTFISGLILKKLREEGRNAGYYKAVLSGAIKEKNGLIPLDCEEVMKISGLKESYENMVSYILENPYSPHLASEVEEVSISMEKIKKDYKSVRDKYDFILCEGSGGIVCPISFSEKKLMLEDIIKEFNLQIILVSNSGLGTINYTVLTVSYLRNLGLKVKGIILNKFNKSDIIHRDNKKIIKELTGVNNISTVPKIEDIEKYDLNELNEVLYGI</sequence>